<evidence type="ECO:0000255" key="1">
    <source>
        <dbReference type="HAMAP-Rule" id="MF_00015"/>
    </source>
</evidence>
<gene>
    <name evidence="1" type="primary">lexA</name>
    <name type="ordered locus">HS_0386</name>
</gene>
<feature type="chain" id="PRO_1000001291" description="LexA repressor">
    <location>
        <begin position="1"/>
        <end position="210"/>
    </location>
</feature>
<feature type="DNA-binding region" description="H-T-H motif" evidence="1">
    <location>
        <begin position="31"/>
        <end position="51"/>
    </location>
</feature>
<feature type="active site" description="For autocatalytic cleavage activity" evidence="1">
    <location>
        <position position="126"/>
    </location>
</feature>
<feature type="active site" description="For autocatalytic cleavage activity" evidence="1">
    <location>
        <position position="163"/>
    </location>
</feature>
<feature type="site" description="Cleavage; by autolysis" evidence="1">
    <location>
        <begin position="91"/>
        <end position="92"/>
    </location>
</feature>
<comment type="function">
    <text evidence="1">Represses a number of genes involved in the response to DNA damage (SOS response), including recA and lexA. In the presence of single-stranded DNA, RecA interacts with LexA causing an autocatalytic cleavage which disrupts the DNA-binding part of LexA, leading to derepression of the SOS regulon and eventually DNA repair.</text>
</comment>
<comment type="catalytic activity">
    <reaction evidence="1">
        <text>Hydrolysis of Ala-|-Gly bond in repressor LexA.</text>
        <dbReference type="EC" id="3.4.21.88"/>
    </reaction>
</comment>
<comment type="subunit">
    <text evidence="1">Homodimer.</text>
</comment>
<comment type="similarity">
    <text evidence="1">Belongs to the peptidase S24 family.</text>
</comment>
<reference key="1">
    <citation type="journal article" date="2007" name="J. Bacteriol.">
        <title>Complete genome sequence of Haemophilus somnus (Histophilus somni) strain 129Pt and comparison to Haemophilus ducreyi 35000HP and Haemophilus influenzae Rd.</title>
        <authorList>
            <person name="Challacombe J.F."/>
            <person name="Duncan A.J."/>
            <person name="Brettin T.S."/>
            <person name="Bruce D."/>
            <person name="Chertkov O."/>
            <person name="Detter J.C."/>
            <person name="Han C.S."/>
            <person name="Misra M."/>
            <person name="Richardson P."/>
            <person name="Tapia R."/>
            <person name="Thayer N."/>
            <person name="Xie G."/>
            <person name="Inzana T.J."/>
        </authorList>
    </citation>
    <scope>NUCLEOTIDE SEQUENCE [LARGE SCALE GENOMIC DNA]</scope>
    <source>
        <strain>129Pt</strain>
    </source>
</reference>
<protein>
    <recommendedName>
        <fullName evidence="1">LexA repressor</fullName>
        <ecNumber evidence="1">3.4.21.88</ecNumber>
    </recommendedName>
</protein>
<name>LEXA_HISS1</name>
<keyword id="KW-0068">Autocatalytic cleavage</keyword>
<keyword id="KW-0227">DNA damage</keyword>
<keyword id="KW-0234">DNA repair</keyword>
<keyword id="KW-0235">DNA replication</keyword>
<keyword id="KW-0238">DNA-binding</keyword>
<keyword id="KW-0378">Hydrolase</keyword>
<keyword id="KW-0678">Repressor</keyword>
<keyword id="KW-0742">SOS response</keyword>
<keyword id="KW-0804">Transcription</keyword>
<keyword id="KW-0805">Transcription regulation</keyword>
<organism>
    <name type="scientific">Histophilus somni (strain 129Pt)</name>
    <name type="common">Haemophilus somnus</name>
    <dbReference type="NCBI Taxonomy" id="205914"/>
    <lineage>
        <taxon>Bacteria</taxon>
        <taxon>Pseudomonadati</taxon>
        <taxon>Pseudomonadota</taxon>
        <taxon>Gammaproteobacteria</taxon>
        <taxon>Pasteurellales</taxon>
        <taxon>Pasteurellaceae</taxon>
        <taxon>Histophilus</taxon>
    </lineage>
</organism>
<sequence>MSSIKSLTTRQQEVFDLIKRHIESTGMPPTRVEISKELGFRSPNAAEEHLKALARKGVIEIVSGVSRGIRLLTDIEEPENEGLPLIGRVAAGEPILAEQHIEATYQVDANMFKPQADFLLKVYGQSMKDIGILDGDLLAVHSTKDIRNGQIVVARIEDEVTVKRFERKGSVVYLHAENEEFEPIVVDLTQQPYFEIEGIAVGIIRNNAWM</sequence>
<dbReference type="EC" id="3.4.21.88" evidence="1"/>
<dbReference type="EMBL" id="CP000436">
    <property type="protein sequence ID" value="ABI24664.1"/>
    <property type="molecule type" value="Genomic_DNA"/>
</dbReference>
<dbReference type="SMR" id="Q0I2G7"/>
<dbReference type="MEROPS" id="S24.001"/>
<dbReference type="KEGG" id="hso:HS_0386"/>
<dbReference type="eggNOG" id="COG1974">
    <property type="taxonomic scope" value="Bacteria"/>
</dbReference>
<dbReference type="HOGENOM" id="CLU_066192_45_3_6"/>
<dbReference type="GO" id="GO:0003677">
    <property type="term" value="F:DNA binding"/>
    <property type="evidence" value="ECO:0007669"/>
    <property type="project" value="UniProtKB-UniRule"/>
</dbReference>
<dbReference type="GO" id="GO:0004252">
    <property type="term" value="F:serine-type endopeptidase activity"/>
    <property type="evidence" value="ECO:0007669"/>
    <property type="project" value="UniProtKB-UniRule"/>
</dbReference>
<dbReference type="GO" id="GO:0006281">
    <property type="term" value="P:DNA repair"/>
    <property type="evidence" value="ECO:0007669"/>
    <property type="project" value="UniProtKB-UniRule"/>
</dbReference>
<dbReference type="GO" id="GO:0006260">
    <property type="term" value="P:DNA replication"/>
    <property type="evidence" value="ECO:0007669"/>
    <property type="project" value="UniProtKB-UniRule"/>
</dbReference>
<dbReference type="GO" id="GO:0045892">
    <property type="term" value="P:negative regulation of DNA-templated transcription"/>
    <property type="evidence" value="ECO:0007669"/>
    <property type="project" value="UniProtKB-UniRule"/>
</dbReference>
<dbReference type="GO" id="GO:0006508">
    <property type="term" value="P:proteolysis"/>
    <property type="evidence" value="ECO:0007669"/>
    <property type="project" value="InterPro"/>
</dbReference>
<dbReference type="GO" id="GO:0009432">
    <property type="term" value="P:SOS response"/>
    <property type="evidence" value="ECO:0007669"/>
    <property type="project" value="UniProtKB-UniRule"/>
</dbReference>
<dbReference type="CDD" id="cd06529">
    <property type="entry name" value="S24_LexA-like"/>
    <property type="match status" value="1"/>
</dbReference>
<dbReference type="FunFam" id="1.10.10.10:FF:000009">
    <property type="entry name" value="LexA repressor"/>
    <property type="match status" value="1"/>
</dbReference>
<dbReference type="FunFam" id="2.10.109.10:FF:000001">
    <property type="entry name" value="LexA repressor"/>
    <property type="match status" value="1"/>
</dbReference>
<dbReference type="Gene3D" id="2.10.109.10">
    <property type="entry name" value="Umud Fragment, subunit A"/>
    <property type="match status" value="1"/>
</dbReference>
<dbReference type="Gene3D" id="1.10.10.10">
    <property type="entry name" value="Winged helix-like DNA-binding domain superfamily/Winged helix DNA-binding domain"/>
    <property type="match status" value="1"/>
</dbReference>
<dbReference type="HAMAP" id="MF_00015">
    <property type="entry name" value="LexA"/>
    <property type="match status" value="1"/>
</dbReference>
<dbReference type="InterPro" id="IPR006200">
    <property type="entry name" value="LexA"/>
</dbReference>
<dbReference type="InterPro" id="IPR039418">
    <property type="entry name" value="LexA-like"/>
</dbReference>
<dbReference type="InterPro" id="IPR036286">
    <property type="entry name" value="LexA/Signal_pep-like_sf"/>
</dbReference>
<dbReference type="InterPro" id="IPR006199">
    <property type="entry name" value="LexA_DNA-bd_dom"/>
</dbReference>
<dbReference type="InterPro" id="IPR050077">
    <property type="entry name" value="LexA_repressor"/>
</dbReference>
<dbReference type="InterPro" id="IPR006197">
    <property type="entry name" value="Peptidase_S24_LexA"/>
</dbReference>
<dbReference type="InterPro" id="IPR015927">
    <property type="entry name" value="Peptidase_S24_S26A/B/C"/>
</dbReference>
<dbReference type="InterPro" id="IPR036388">
    <property type="entry name" value="WH-like_DNA-bd_sf"/>
</dbReference>
<dbReference type="InterPro" id="IPR036390">
    <property type="entry name" value="WH_DNA-bd_sf"/>
</dbReference>
<dbReference type="NCBIfam" id="TIGR00498">
    <property type="entry name" value="lexA"/>
    <property type="match status" value="1"/>
</dbReference>
<dbReference type="PANTHER" id="PTHR33516">
    <property type="entry name" value="LEXA REPRESSOR"/>
    <property type="match status" value="1"/>
</dbReference>
<dbReference type="PANTHER" id="PTHR33516:SF2">
    <property type="entry name" value="LEXA REPRESSOR-RELATED"/>
    <property type="match status" value="1"/>
</dbReference>
<dbReference type="Pfam" id="PF01726">
    <property type="entry name" value="LexA_DNA_bind"/>
    <property type="match status" value="1"/>
</dbReference>
<dbReference type="Pfam" id="PF00717">
    <property type="entry name" value="Peptidase_S24"/>
    <property type="match status" value="1"/>
</dbReference>
<dbReference type="PRINTS" id="PR00726">
    <property type="entry name" value="LEXASERPTASE"/>
</dbReference>
<dbReference type="SUPFAM" id="SSF51306">
    <property type="entry name" value="LexA/Signal peptidase"/>
    <property type="match status" value="1"/>
</dbReference>
<dbReference type="SUPFAM" id="SSF46785">
    <property type="entry name" value="Winged helix' DNA-binding domain"/>
    <property type="match status" value="1"/>
</dbReference>
<proteinExistence type="inferred from homology"/>
<accession>Q0I2G7</accession>